<dbReference type="EC" id="2.7.4.3" evidence="1"/>
<dbReference type="EMBL" id="CR936257">
    <property type="protein sequence ID" value="CAI50546.1"/>
    <property type="molecule type" value="Genomic_DNA"/>
</dbReference>
<dbReference type="RefSeq" id="WP_011324158.1">
    <property type="nucleotide sequence ID" value="NC_007426.1"/>
</dbReference>
<dbReference type="SMR" id="Q3IMW0"/>
<dbReference type="STRING" id="348780.NP_4910A"/>
<dbReference type="EnsemblBacteria" id="CAI50546">
    <property type="protein sequence ID" value="CAI50546"/>
    <property type="gene ID" value="NP_4910A"/>
</dbReference>
<dbReference type="GeneID" id="3702493"/>
<dbReference type="KEGG" id="nph:NP_4910A"/>
<dbReference type="eggNOG" id="arCOG01046">
    <property type="taxonomic scope" value="Archaea"/>
</dbReference>
<dbReference type="HOGENOM" id="CLU_032354_6_1_2"/>
<dbReference type="OrthoDB" id="31230at2157"/>
<dbReference type="UniPathway" id="UPA00588">
    <property type="reaction ID" value="UER00649"/>
</dbReference>
<dbReference type="Proteomes" id="UP000002698">
    <property type="component" value="Chromosome"/>
</dbReference>
<dbReference type="GO" id="GO:0005737">
    <property type="term" value="C:cytoplasm"/>
    <property type="evidence" value="ECO:0007669"/>
    <property type="project" value="UniProtKB-SubCell"/>
</dbReference>
<dbReference type="GO" id="GO:0004017">
    <property type="term" value="F:adenylate kinase activity"/>
    <property type="evidence" value="ECO:0007669"/>
    <property type="project" value="UniProtKB-UniRule"/>
</dbReference>
<dbReference type="GO" id="GO:0005524">
    <property type="term" value="F:ATP binding"/>
    <property type="evidence" value="ECO:0007669"/>
    <property type="project" value="UniProtKB-UniRule"/>
</dbReference>
<dbReference type="GO" id="GO:0044209">
    <property type="term" value="P:AMP salvage"/>
    <property type="evidence" value="ECO:0007669"/>
    <property type="project" value="UniProtKB-UniRule"/>
</dbReference>
<dbReference type="CDD" id="cd01428">
    <property type="entry name" value="ADK"/>
    <property type="match status" value="1"/>
</dbReference>
<dbReference type="Gene3D" id="3.40.50.300">
    <property type="entry name" value="P-loop containing nucleotide triphosphate hydrolases"/>
    <property type="match status" value="1"/>
</dbReference>
<dbReference type="HAMAP" id="MF_00235">
    <property type="entry name" value="Adenylate_kinase_Adk"/>
    <property type="match status" value="1"/>
</dbReference>
<dbReference type="InterPro" id="IPR006259">
    <property type="entry name" value="Adenyl_kin_sub"/>
</dbReference>
<dbReference type="InterPro" id="IPR000850">
    <property type="entry name" value="Adenylat/UMP-CMP_kin"/>
</dbReference>
<dbReference type="InterPro" id="IPR033690">
    <property type="entry name" value="Adenylat_kinase_CS"/>
</dbReference>
<dbReference type="InterPro" id="IPR027417">
    <property type="entry name" value="P-loop_NTPase"/>
</dbReference>
<dbReference type="NCBIfam" id="TIGR01351">
    <property type="entry name" value="adk"/>
    <property type="match status" value="1"/>
</dbReference>
<dbReference type="NCBIfam" id="NF011103">
    <property type="entry name" value="PRK14530.1"/>
    <property type="match status" value="1"/>
</dbReference>
<dbReference type="PANTHER" id="PTHR23359">
    <property type="entry name" value="NUCLEOTIDE KINASE"/>
    <property type="match status" value="1"/>
</dbReference>
<dbReference type="Pfam" id="PF00406">
    <property type="entry name" value="ADK"/>
    <property type="match status" value="1"/>
</dbReference>
<dbReference type="PRINTS" id="PR00094">
    <property type="entry name" value="ADENYLTKNASE"/>
</dbReference>
<dbReference type="SUPFAM" id="SSF52540">
    <property type="entry name" value="P-loop containing nucleoside triphosphate hydrolases"/>
    <property type="match status" value="1"/>
</dbReference>
<dbReference type="PROSITE" id="PS00113">
    <property type="entry name" value="ADENYLATE_KINASE"/>
    <property type="match status" value="1"/>
</dbReference>
<accession>Q3IMW0</accession>
<reference key="1">
    <citation type="journal article" date="2005" name="Genome Res.">
        <title>Living with two extremes: conclusions from the genome sequence of Natronomonas pharaonis.</title>
        <authorList>
            <person name="Falb M."/>
            <person name="Pfeiffer F."/>
            <person name="Palm P."/>
            <person name="Rodewald K."/>
            <person name="Hickmann V."/>
            <person name="Tittor J."/>
            <person name="Oesterhelt D."/>
        </authorList>
    </citation>
    <scope>NUCLEOTIDE SEQUENCE [LARGE SCALE GENOMIC DNA]</scope>
    <source>
        <strain>ATCC 35678 / DSM 2160 / CIP 103997 / JCM 8858 / NBRC 14720 / NCIMB 2260 / Gabara</strain>
    </source>
</reference>
<feature type="chain" id="PRO_1000021749" description="Adenylate kinase">
    <location>
        <begin position="1"/>
        <end position="206"/>
    </location>
</feature>
<feature type="region of interest" description="Disordered" evidence="2">
    <location>
        <begin position="1"/>
        <end position="21"/>
    </location>
</feature>
<feature type="region of interest" description="NMP" evidence="1">
    <location>
        <begin position="33"/>
        <end position="61"/>
    </location>
</feature>
<feature type="region of interest" description="LID" evidence="1">
    <location>
        <begin position="120"/>
        <end position="153"/>
    </location>
</feature>
<feature type="binding site" evidence="1">
    <location>
        <begin position="13"/>
        <end position="18"/>
    </location>
    <ligand>
        <name>ATP</name>
        <dbReference type="ChEBI" id="CHEBI:30616"/>
    </ligand>
</feature>
<feature type="binding site" evidence="1">
    <location>
        <position position="34"/>
    </location>
    <ligand>
        <name>AMP</name>
        <dbReference type="ChEBI" id="CHEBI:456215"/>
    </ligand>
</feature>
<feature type="binding site" evidence="1">
    <location>
        <position position="39"/>
    </location>
    <ligand>
        <name>AMP</name>
        <dbReference type="ChEBI" id="CHEBI:456215"/>
    </ligand>
</feature>
<feature type="binding site" evidence="1">
    <location>
        <begin position="59"/>
        <end position="61"/>
    </location>
    <ligand>
        <name>AMP</name>
        <dbReference type="ChEBI" id="CHEBI:456215"/>
    </ligand>
</feature>
<feature type="binding site" evidence="1">
    <location>
        <begin position="84"/>
        <end position="87"/>
    </location>
    <ligand>
        <name>AMP</name>
        <dbReference type="ChEBI" id="CHEBI:456215"/>
    </ligand>
</feature>
<feature type="binding site" evidence="1">
    <location>
        <position position="91"/>
    </location>
    <ligand>
        <name>AMP</name>
        <dbReference type="ChEBI" id="CHEBI:456215"/>
    </ligand>
</feature>
<feature type="binding site" evidence="1">
    <location>
        <position position="121"/>
    </location>
    <ligand>
        <name>ATP</name>
        <dbReference type="ChEBI" id="CHEBI:30616"/>
    </ligand>
</feature>
<feature type="binding site" evidence="1">
    <location>
        <begin position="130"/>
        <end position="131"/>
    </location>
    <ligand>
        <name>ATP</name>
        <dbReference type="ChEBI" id="CHEBI:30616"/>
    </ligand>
</feature>
<feature type="binding site" evidence="1">
    <location>
        <position position="150"/>
    </location>
    <ligand>
        <name>AMP</name>
        <dbReference type="ChEBI" id="CHEBI:456215"/>
    </ligand>
</feature>
<feature type="binding site" evidence="1">
    <location>
        <position position="161"/>
    </location>
    <ligand>
        <name>AMP</name>
        <dbReference type="ChEBI" id="CHEBI:456215"/>
    </ligand>
</feature>
<feature type="binding site" evidence="1">
    <location>
        <position position="189"/>
    </location>
    <ligand>
        <name>ATP</name>
        <dbReference type="ChEBI" id="CHEBI:30616"/>
    </ligand>
</feature>
<gene>
    <name evidence="3" type="primary">adk1</name>
    <name type="ordered locus">NP_4910A</name>
</gene>
<sequence length="206" mass="22957">MSQPKILLLGAPGAGKGTQSSNIVDEYGVDHITTGDALRANKDMETEHGTPREFMEAGELVPDPVVNEIVQAAIDEADGFVLDGYPRNLSQAEYLSDITDVDVVALLDVGRDELVDRLTGRRMDPETGDIYHTEFNMPDDEEVRERLVQRDDDTEETVNERLDVFDENTQPVIDYYEDEGELVRIDGEASPDEVWDDLQAAIDDAL</sequence>
<evidence type="ECO:0000255" key="1">
    <source>
        <dbReference type="HAMAP-Rule" id="MF_00235"/>
    </source>
</evidence>
<evidence type="ECO:0000256" key="2">
    <source>
        <dbReference type="SAM" id="MobiDB-lite"/>
    </source>
</evidence>
<evidence type="ECO:0000312" key="3">
    <source>
        <dbReference type="EMBL" id="CAI50546.1"/>
    </source>
</evidence>
<proteinExistence type="inferred from homology"/>
<comment type="function">
    <text evidence="1">Catalyzes the reversible transfer of the terminal phosphate group between ATP and AMP. Plays an important role in cellular energy homeostasis and in adenine nucleotide metabolism.</text>
</comment>
<comment type="catalytic activity">
    <reaction evidence="1">
        <text>AMP + ATP = 2 ADP</text>
        <dbReference type="Rhea" id="RHEA:12973"/>
        <dbReference type="ChEBI" id="CHEBI:30616"/>
        <dbReference type="ChEBI" id="CHEBI:456215"/>
        <dbReference type="ChEBI" id="CHEBI:456216"/>
        <dbReference type="EC" id="2.7.4.3"/>
    </reaction>
</comment>
<comment type="pathway">
    <text evidence="1">Purine metabolism; AMP biosynthesis via salvage pathway; AMP from ADP: step 1/1.</text>
</comment>
<comment type="subunit">
    <text evidence="1">Monomer.</text>
</comment>
<comment type="subcellular location">
    <subcellularLocation>
        <location evidence="1">Cytoplasm</location>
    </subcellularLocation>
</comment>
<comment type="domain">
    <text evidence="1">Consists of three domains, a large central CORE domain and two small peripheral domains, NMPbind and LID, which undergo movements during catalysis. The LID domain closes over the site of phosphoryl transfer upon ATP binding. Assembling and dissambling the active center during each catalytic cycle provides an effective means to prevent ATP hydrolysis.</text>
</comment>
<comment type="similarity">
    <text evidence="1">Belongs to the adenylate kinase family.</text>
</comment>
<protein>
    <recommendedName>
        <fullName evidence="1">Adenylate kinase</fullName>
        <shortName evidence="1">AK</shortName>
        <ecNumber evidence="1">2.7.4.3</ecNumber>
    </recommendedName>
    <alternativeName>
        <fullName evidence="1">ATP-AMP transphosphorylase</fullName>
    </alternativeName>
    <alternativeName>
        <fullName evidence="1">ATP:AMP phosphotransferase</fullName>
    </alternativeName>
    <alternativeName>
        <fullName evidence="1">Adenylate monophosphate kinase</fullName>
    </alternativeName>
</protein>
<organism>
    <name type="scientific">Natronomonas pharaonis (strain ATCC 35678 / DSM 2160 / CIP 103997 / JCM 8858 / NBRC 14720 / NCIMB 2260 / Gabara)</name>
    <name type="common">Halobacterium pharaonis</name>
    <dbReference type="NCBI Taxonomy" id="348780"/>
    <lineage>
        <taxon>Archaea</taxon>
        <taxon>Methanobacteriati</taxon>
        <taxon>Methanobacteriota</taxon>
        <taxon>Stenosarchaea group</taxon>
        <taxon>Halobacteria</taxon>
        <taxon>Halobacteriales</taxon>
        <taxon>Haloarculaceae</taxon>
        <taxon>Natronomonas</taxon>
    </lineage>
</organism>
<name>KAD_NATPD</name>
<keyword id="KW-0067">ATP-binding</keyword>
<keyword id="KW-0963">Cytoplasm</keyword>
<keyword id="KW-0418">Kinase</keyword>
<keyword id="KW-0545">Nucleotide biosynthesis</keyword>
<keyword id="KW-0547">Nucleotide-binding</keyword>
<keyword id="KW-1185">Reference proteome</keyword>
<keyword id="KW-0808">Transferase</keyword>